<reference key="1">
    <citation type="journal article" date="2004" name="Nucleic Acids Res.">
        <title>Genome sequence of Symbiobacterium thermophilum, an uncultivable bacterium that depends on microbial commensalism.</title>
        <authorList>
            <person name="Ueda K."/>
            <person name="Yamashita A."/>
            <person name="Ishikawa J."/>
            <person name="Shimada M."/>
            <person name="Watsuji T."/>
            <person name="Morimura K."/>
            <person name="Ikeda H."/>
            <person name="Hattori M."/>
            <person name="Beppu T."/>
        </authorList>
    </citation>
    <scope>NUCLEOTIDE SEQUENCE [LARGE SCALE GENOMIC DNA]</scope>
    <source>
        <strain>DSM 24528 / JCM 14929 / IAM 14863 / T</strain>
    </source>
</reference>
<evidence type="ECO:0000255" key="1">
    <source>
        <dbReference type="HAMAP-Rule" id="MF_00152"/>
    </source>
</evidence>
<accession>Q67S99</accession>
<name>END4_SYMTH</name>
<keyword id="KW-0227">DNA damage</keyword>
<keyword id="KW-0234">DNA repair</keyword>
<keyword id="KW-0255">Endonuclease</keyword>
<keyword id="KW-0378">Hydrolase</keyword>
<keyword id="KW-0479">Metal-binding</keyword>
<keyword id="KW-0540">Nuclease</keyword>
<keyword id="KW-1185">Reference proteome</keyword>
<keyword id="KW-0862">Zinc</keyword>
<feature type="chain" id="PRO_0000190879" description="Probable endonuclease 4">
    <location>
        <begin position="1"/>
        <end position="276"/>
    </location>
</feature>
<feature type="binding site" evidence="1">
    <location>
        <position position="65"/>
    </location>
    <ligand>
        <name>Zn(2+)</name>
        <dbReference type="ChEBI" id="CHEBI:29105"/>
        <label>1</label>
    </ligand>
</feature>
<feature type="binding site" evidence="1">
    <location>
        <position position="105"/>
    </location>
    <ligand>
        <name>Zn(2+)</name>
        <dbReference type="ChEBI" id="CHEBI:29105"/>
        <label>1</label>
    </ligand>
</feature>
<feature type="binding site" evidence="1">
    <location>
        <position position="141"/>
    </location>
    <ligand>
        <name>Zn(2+)</name>
        <dbReference type="ChEBI" id="CHEBI:29105"/>
        <label>1</label>
    </ligand>
</feature>
<feature type="binding site" evidence="1">
    <location>
        <position position="141"/>
    </location>
    <ligand>
        <name>Zn(2+)</name>
        <dbReference type="ChEBI" id="CHEBI:29105"/>
        <label>2</label>
    </ligand>
</feature>
<feature type="binding site" evidence="1">
    <location>
        <position position="175"/>
    </location>
    <ligand>
        <name>Zn(2+)</name>
        <dbReference type="ChEBI" id="CHEBI:29105"/>
        <label>2</label>
    </ligand>
</feature>
<feature type="binding site" evidence="1">
    <location>
        <position position="178"/>
    </location>
    <ligand>
        <name>Zn(2+)</name>
        <dbReference type="ChEBI" id="CHEBI:29105"/>
        <label>3</label>
    </ligand>
</feature>
<feature type="binding site" evidence="1">
    <location>
        <position position="210"/>
    </location>
    <ligand>
        <name>Zn(2+)</name>
        <dbReference type="ChEBI" id="CHEBI:29105"/>
        <label>2</label>
    </ligand>
</feature>
<feature type="binding site" evidence="1">
    <location>
        <position position="223"/>
    </location>
    <ligand>
        <name>Zn(2+)</name>
        <dbReference type="ChEBI" id="CHEBI:29105"/>
        <label>3</label>
    </ligand>
</feature>
<feature type="binding site" evidence="1">
    <location>
        <position position="225"/>
    </location>
    <ligand>
        <name>Zn(2+)</name>
        <dbReference type="ChEBI" id="CHEBI:29105"/>
        <label>3</label>
    </ligand>
</feature>
<feature type="binding site" evidence="1">
    <location>
        <position position="255"/>
    </location>
    <ligand>
        <name>Zn(2+)</name>
        <dbReference type="ChEBI" id="CHEBI:29105"/>
        <label>2</label>
    </ligand>
</feature>
<gene>
    <name evidence="1" type="primary">nfo</name>
    <name type="ordered locus">STH459</name>
</gene>
<protein>
    <recommendedName>
        <fullName evidence="1">Probable endonuclease 4</fullName>
        <ecNumber evidence="1">3.1.21.2</ecNumber>
    </recommendedName>
    <alternativeName>
        <fullName evidence="1">Endodeoxyribonuclease IV</fullName>
    </alternativeName>
    <alternativeName>
        <fullName evidence="1">Endonuclease IV</fullName>
    </alternativeName>
</protein>
<comment type="function">
    <text evidence="1">Endonuclease IV plays a role in DNA repair. It cleaves phosphodiester bonds at apurinic or apyrimidinic (AP) sites, generating a 3'-hydroxyl group and a 5'-terminal sugar phosphate.</text>
</comment>
<comment type="catalytic activity">
    <reaction evidence="1">
        <text>Endonucleolytic cleavage to 5'-phosphooligonucleotide end-products.</text>
        <dbReference type="EC" id="3.1.21.2"/>
    </reaction>
</comment>
<comment type="cofactor">
    <cofactor evidence="1">
        <name>Zn(2+)</name>
        <dbReference type="ChEBI" id="CHEBI:29105"/>
    </cofactor>
    <text evidence="1">Binds 3 Zn(2+) ions.</text>
</comment>
<comment type="similarity">
    <text evidence="1">Belongs to the AP endonuclease 2 family.</text>
</comment>
<proteinExistence type="inferred from homology"/>
<sequence>MKLGCHISISKGFPQAVENAHRLGCEAFQFFTKNPRGFKGKSADPEAAARGRALMAEYGLVAVAHAPYITNLSTPDPELQAISIASLKQDLENAEAYGAIGCVCHMGKHVGEGEAYGRARMVETLNRLLEAYTGSCPLLLENTAGMGSELGTHLEELMEVRSRVEQPERIAFCFDTCHAFAAGIYRPEDWEDFVAHARAIGYWGLLRAVHLNDSKFDHGSRKDRHANLGKGFLGEAGIATLLRSGAFEGLPVVLETPVKDEAEYGPEIAYARSLLQ</sequence>
<dbReference type="EC" id="3.1.21.2" evidence="1"/>
<dbReference type="EMBL" id="AP006840">
    <property type="protein sequence ID" value="BAD39444.1"/>
    <property type="molecule type" value="Genomic_DNA"/>
</dbReference>
<dbReference type="RefSeq" id="WP_011194593.1">
    <property type="nucleotide sequence ID" value="NC_006177.1"/>
</dbReference>
<dbReference type="SMR" id="Q67S99"/>
<dbReference type="STRING" id="292459.STH459"/>
<dbReference type="KEGG" id="sth:STH459"/>
<dbReference type="eggNOG" id="COG0648">
    <property type="taxonomic scope" value="Bacteria"/>
</dbReference>
<dbReference type="HOGENOM" id="CLU_025885_0_1_9"/>
<dbReference type="OrthoDB" id="9805666at2"/>
<dbReference type="Proteomes" id="UP000000417">
    <property type="component" value="Chromosome"/>
</dbReference>
<dbReference type="GO" id="GO:0008833">
    <property type="term" value="F:deoxyribonuclease IV (phage-T4-induced) activity"/>
    <property type="evidence" value="ECO:0007669"/>
    <property type="project" value="UniProtKB-UniRule"/>
</dbReference>
<dbReference type="GO" id="GO:0003677">
    <property type="term" value="F:DNA binding"/>
    <property type="evidence" value="ECO:0007669"/>
    <property type="project" value="InterPro"/>
</dbReference>
<dbReference type="GO" id="GO:0003906">
    <property type="term" value="F:DNA-(apurinic or apyrimidinic site) endonuclease activity"/>
    <property type="evidence" value="ECO:0007669"/>
    <property type="project" value="TreeGrafter"/>
</dbReference>
<dbReference type="GO" id="GO:0008081">
    <property type="term" value="F:phosphoric diester hydrolase activity"/>
    <property type="evidence" value="ECO:0007669"/>
    <property type="project" value="TreeGrafter"/>
</dbReference>
<dbReference type="GO" id="GO:0008270">
    <property type="term" value="F:zinc ion binding"/>
    <property type="evidence" value="ECO:0007669"/>
    <property type="project" value="UniProtKB-UniRule"/>
</dbReference>
<dbReference type="GO" id="GO:0006284">
    <property type="term" value="P:base-excision repair"/>
    <property type="evidence" value="ECO:0007669"/>
    <property type="project" value="TreeGrafter"/>
</dbReference>
<dbReference type="CDD" id="cd00019">
    <property type="entry name" value="AP2Ec"/>
    <property type="match status" value="1"/>
</dbReference>
<dbReference type="FunFam" id="3.20.20.150:FF:000001">
    <property type="entry name" value="Probable endonuclease 4"/>
    <property type="match status" value="1"/>
</dbReference>
<dbReference type="Gene3D" id="3.20.20.150">
    <property type="entry name" value="Divalent-metal-dependent TIM barrel enzymes"/>
    <property type="match status" value="1"/>
</dbReference>
<dbReference type="HAMAP" id="MF_00152">
    <property type="entry name" value="Nfo"/>
    <property type="match status" value="1"/>
</dbReference>
<dbReference type="InterPro" id="IPR001719">
    <property type="entry name" value="AP_endonuc_2"/>
</dbReference>
<dbReference type="InterPro" id="IPR018246">
    <property type="entry name" value="AP_endonuc_F2_Zn_BS"/>
</dbReference>
<dbReference type="InterPro" id="IPR036237">
    <property type="entry name" value="Xyl_isomerase-like_sf"/>
</dbReference>
<dbReference type="InterPro" id="IPR013022">
    <property type="entry name" value="Xyl_isomerase-like_TIM-brl"/>
</dbReference>
<dbReference type="NCBIfam" id="TIGR00587">
    <property type="entry name" value="nfo"/>
    <property type="match status" value="1"/>
</dbReference>
<dbReference type="PANTHER" id="PTHR21445:SF0">
    <property type="entry name" value="APURINIC-APYRIMIDINIC ENDONUCLEASE"/>
    <property type="match status" value="1"/>
</dbReference>
<dbReference type="PANTHER" id="PTHR21445">
    <property type="entry name" value="ENDONUCLEASE IV ENDODEOXYRIBONUCLEASE IV"/>
    <property type="match status" value="1"/>
</dbReference>
<dbReference type="Pfam" id="PF01261">
    <property type="entry name" value="AP_endonuc_2"/>
    <property type="match status" value="1"/>
</dbReference>
<dbReference type="SMART" id="SM00518">
    <property type="entry name" value="AP2Ec"/>
    <property type="match status" value="1"/>
</dbReference>
<dbReference type="SUPFAM" id="SSF51658">
    <property type="entry name" value="Xylose isomerase-like"/>
    <property type="match status" value="1"/>
</dbReference>
<dbReference type="PROSITE" id="PS00730">
    <property type="entry name" value="AP_NUCLEASE_F2_2"/>
    <property type="match status" value="1"/>
</dbReference>
<dbReference type="PROSITE" id="PS00731">
    <property type="entry name" value="AP_NUCLEASE_F2_3"/>
    <property type="match status" value="1"/>
</dbReference>
<dbReference type="PROSITE" id="PS51432">
    <property type="entry name" value="AP_NUCLEASE_F2_4"/>
    <property type="match status" value="1"/>
</dbReference>
<organism>
    <name type="scientific">Symbiobacterium thermophilum (strain DSM 24528 / JCM 14929 / IAM 14863 / T)</name>
    <dbReference type="NCBI Taxonomy" id="292459"/>
    <lineage>
        <taxon>Bacteria</taxon>
        <taxon>Bacillati</taxon>
        <taxon>Bacillota</taxon>
        <taxon>Clostridia</taxon>
        <taxon>Eubacteriales</taxon>
        <taxon>Symbiobacteriaceae</taxon>
        <taxon>Symbiobacterium</taxon>
    </lineage>
</organism>